<reference key="1">
    <citation type="submission" date="2006-03" db="EMBL/GenBank/DDBJ databases">
        <title>Complete sequence of Methylobacillus flagellatus KT.</title>
        <authorList>
            <consortium name="US DOE Joint Genome Institute"/>
            <person name="Copeland A."/>
            <person name="Lucas S."/>
            <person name="Lapidus A."/>
            <person name="Barry K."/>
            <person name="Detter J.C."/>
            <person name="Glavina del Rio T."/>
            <person name="Hammon N."/>
            <person name="Israni S."/>
            <person name="Dalin E."/>
            <person name="Tice H."/>
            <person name="Pitluck S."/>
            <person name="Brettin T."/>
            <person name="Bruce D."/>
            <person name="Han C."/>
            <person name="Tapia R."/>
            <person name="Saunders E."/>
            <person name="Gilna P."/>
            <person name="Schmutz J."/>
            <person name="Larimer F."/>
            <person name="Land M."/>
            <person name="Kyrpides N."/>
            <person name="Anderson I."/>
            <person name="Richardson P."/>
        </authorList>
    </citation>
    <scope>NUCLEOTIDE SEQUENCE [LARGE SCALE GENOMIC DNA]</scope>
    <source>
        <strain>ATCC 51484 / DSM 6875 / VKM B-1610 / KT</strain>
    </source>
</reference>
<reference key="2">
    <citation type="journal article" date="1995" name="J. Bacteriol.">
        <title>Cloning, sequencing, and mutation of a gene for azurin in Methylobacillus flagellatum KT.</title>
        <authorList>
            <person name="Gak E.R."/>
            <person name="Chistoserdov A.Y."/>
            <person name="Lidstrom M.E."/>
        </authorList>
    </citation>
    <scope>NUCLEOTIDE SEQUENCE [GENOMIC DNA] OF 1-80 AND 232-283</scope>
</reference>
<keyword id="KW-0004">4Fe-4S</keyword>
<keyword id="KW-0249">Electron transport</keyword>
<keyword id="KW-0408">Iron</keyword>
<keyword id="KW-0411">Iron-sulfur</keyword>
<keyword id="KW-0479">Metal-binding</keyword>
<keyword id="KW-1185">Reference proteome</keyword>
<keyword id="KW-0677">Repeat</keyword>
<keyword id="KW-0813">Transport</keyword>
<dbReference type="EMBL" id="CP000284">
    <property type="protein sequence ID" value="ABE48825.1"/>
    <property type="molecule type" value="Genomic_DNA"/>
</dbReference>
<dbReference type="EMBL" id="L37434">
    <property type="protein sequence ID" value="AAC41477.1"/>
    <property type="molecule type" value="Genomic_DNA"/>
</dbReference>
<dbReference type="EMBL" id="L37426">
    <property type="protein sequence ID" value="AAC41480.1"/>
    <property type="molecule type" value="Genomic_DNA"/>
</dbReference>
<dbReference type="RefSeq" id="WP_011478922.1">
    <property type="nucleotide sequence ID" value="NC_007947.1"/>
</dbReference>
<dbReference type="STRING" id="265072.Mfla_0555"/>
<dbReference type="KEGG" id="mfa:Mfla_0555"/>
<dbReference type="eggNOG" id="COG0348">
    <property type="taxonomic scope" value="Bacteria"/>
</dbReference>
<dbReference type="HOGENOM" id="CLU_066585_1_0_4"/>
<dbReference type="OrthoDB" id="9784262at2"/>
<dbReference type="UniPathway" id="UPA00895"/>
<dbReference type="Proteomes" id="UP000002440">
    <property type="component" value="Chromosome"/>
</dbReference>
<dbReference type="GO" id="GO:0005886">
    <property type="term" value="C:plasma membrane"/>
    <property type="evidence" value="ECO:0007669"/>
    <property type="project" value="TreeGrafter"/>
</dbReference>
<dbReference type="GO" id="GO:0051539">
    <property type="term" value="F:4 iron, 4 sulfur cluster binding"/>
    <property type="evidence" value="ECO:0007669"/>
    <property type="project" value="UniProtKB-KW"/>
</dbReference>
<dbReference type="GO" id="GO:0046872">
    <property type="term" value="F:metal ion binding"/>
    <property type="evidence" value="ECO:0007669"/>
    <property type="project" value="UniProtKB-KW"/>
</dbReference>
<dbReference type="Gene3D" id="3.30.70.20">
    <property type="match status" value="1"/>
</dbReference>
<dbReference type="InterPro" id="IPR017896">
    <property type="entry name" value="4Fe4S_Fe-S-bd"/>
</dbReference>
<dbReference type="InterPro" id="IPR017900">
    <property type="entry name" value="4Fe4S_Fe_S_CS"/>
</dbReference>
<dbReference type="InterPro" id="IPR051684">
    <property type="entry name" value="Electron_Trans/Redox"/>
</dbReference>
<dbReference type="InterPro" id="IPR011886">
    <property type="entry name" value="NapH_MauN"/>
</dbReference>
<dbReference type="NCBIfam" id="TIGR02163">
    <property type="entry name" value="napH"/>
    <property type="match status" value="1"/>
</dbReference>
<dbReference type="NCBIfam" id="NF007013">
    <property type="entry name" value="PRK09477.1"/>
    <property type="match status" value="1"/>
</dbReference>
<dbReference type="PANTHER" id="PTHR30176">
    <property type="entry name" value="FERREDOXIN-TYPE PROTEIN NAPH"/>
    <property type="match status" value="1"/>
</dbReference>
<dbReference type="PANTHER" id="PTHR30176:SF3">
    <property type="entry name" value="FERREDOXIN-TYPE PROTEIN NAPH"/>
    <property type="match status" value="1"/>
</dbReference>
<dbReference type="Pfam" id="PF13237">
    <property type="entry name" value="Fer4_10"/>
    <property type="match status" value="1"/>
</dbReference>
<dbReference type="Pfam" id="PF12801">
    <property type="entry name" value="Fer4_5"/>
    <property type="match status" value="2"/>
</dbReference>
<dbReference type="SUPFAM" id="SSF54862">
    <property type="entry name" value="4Fe-4S ferredoxins"/>
    <property type="match status" value="1"/>
</dbReference>
<dbReference type="PROSITE" id="PS00198">
    <property type="entry name" value="4FE4S_FER_1"/>
    <property type="match status" value="1"/>
</dbReference>
<dbReference type="PROSITE" id="PS51379">
    <property type="entry name" value="4FE4S_FER_2"/>
    <property type="match status" value="2"/>
</dbReference>
<accession>Q50428</accession>
<accession>Q1H3W2</accession>
<accession>Q50401</accession>
<evidence type="ECO:0000250" key="1"/>
<evidence type="ECO:0000255" key="2">
    <source>
        <dbReference type="PROSITE-ProRule" id="PRU00711"/>
    </source>
</evidence>
<evidence type="ECO:0000305" key="3"/>
<gene>
    <name type="primary">mauN</name>
    <name type="ordered locus">Mfla_0555</name>
</gene>
<feature type="chain" id="PRO_0000159289" description="Methylamine utilization ferredoxin-type protein MauN">
    <location>
        <begin position="1"/>
        <end position="283"/>
    </location>
</feature>
<feature type="domain" description="4Fe-4S ferredoxin-type 1" evidence="2">
    <location>
        <begin position="208"/>
        <end position="239"/>
    </location>
</feature>
<feature type="domain" description="4Fe-4S ferredoxin-type 2" evidence="2">
    <location>
        <begin position="241"/>
        <end position="270"/>
    </location>
</feature>
<feature type="binding site" evidence="1">
    <location>
        <position position="218"/>
    </location>
    <ligand>
        <name>[4Fe-4S] cluster</name>
        <dbReference type="ChEBI" id="CHEBI:49883"/>
        <label>1</label>
    </ligand>
</feature>
<feature type="binding site" evidence="1">
    <location>
        <position position="221"/>
    </location>
    <ligand>
        <name>[4Fe-4S] cluster</name>
        <dbReference type="ChEBI" id="CHEBI:49883"/>
        <label>1</label>
    </ligand>
</feature>
<feature type="binding site" evidence="1">
    <location>
        <position position="224"/>
    </location>
    <ligand>
        <name>[4Fe-4S] cluster</name>
        <dbReference type="ChEBI" id="CHEBI:49883"/>
        <label>1</label>
    </ligand>
</feature>
<feature type="binding site" evidence="1">
    <location>
        <position position="228"/>
    </location>
    <ligand>
        <name>[4Fe-4S] cluster</name>
        <dbReference type="ChEBI" id="CHEBI:49883"/>
        <label>2</label>
    </ligand>
</feature>
<feature type="binding site" evidence="1">
    <location>
        <position position="250"/>
    </location>
    <ligand>
        <name>[4Fe-4S] cluster</name>
        <dbReference type="ChEBI" id="CHEBI:49883"/>
        <label>2</label>
    </ligand>
</feature>
<feature type="binding site" evidence="1">
    <location>
        <position position="253"/>
    </location>
    <ligand>
        <name>[4Fe-4S] cluster</name>
        <dbReference type="ChEBI" id="CHEBI:49883"/>
        <label>2</label>
    </ligand>
</feature>
<feature type="binding site" evidence="1">
    <location>
        <position position="256"/>
    </location>
    <ligand>
        <name>[4Fe-4S] cluster</name>
        <dbReference type="ChEBI" id="CHEBI:49883"/>
        <label>2</label>
    </ligand>
</feature>
<feature type="binding site" evidence="1">
    <location>
        <position position="260"/>
    </location>
    <ligand>
        <name>[4Fe-4S] cluster</name>
        <dbReference type="ChEBI" id="CHEBI:49883"/>
        <label>1</label>
    </ligand>
</feature>
<feature type="sequence conflict" description="In Ref. 2; AAC41477." evidence="3" ref="2">
    <original>L</original>
    <variation>F</variation>
    <location>
        <position position="52"/>
    </location>
</feature>
<feature type="sequence conflict" description="In Ref. 2; AAC41477." evidence="3" ref="2">
    <original>S</original>
    <variation>P</variation>
    <location>
        <position position="69"/>
    </location>
</feature>
<feature type="sequence conflict" description="In Ref. 2." evidence="3" ref="2">
    <original>TMLA</original>
    <variation>RCWR</variation>
    <location>
        <begin position="71"/>
        <end position="74"/>
    </location>
</feature>
<organism>
    <name type="scientific">Methylobacillus flagellatus (strain ATCC 51484 / DSM 6875 / VKM B-1610 / KT)</name>
    <dbReference type="NCBI Taxonomy" id="265072"/>
    <lineage>
        <taxon>Bacteria</taxon>
        <taxon>Pseudomonadati</taxon>
        <taxon>Pseudomonadota</taxon>
        <taxon>Betaproteobacteria</taxon>
        <taxon>Nitrosomonadales</taxon>
        <taxon>Methylophilaceae</taxon>
        <taxon>Methylobacillus</taxon>
    </lineage>
</organism>
<sequence length="283" mass="31178">MTNMGAIRAALYRRRWLLSRRVVQMFIVLAFLVDWPEVGRIAHGNLSSSLWLGVLPLTDPFIALQSLFSGTMLAKTALVGTVIVAGFYFLFGGRIYCSWVCPINMVTDLAYWLRQKLNLKGNMTMSRELRMAVLGMSLILTVLSGTLAWENFNPITLFQRELMWTSVAGSMVLLSLFLFDLLITRRGWCGHLCPVGAFYAVLGRYGRLRVTAEQSGSCAGCGSCIRVCPEPHVLAPVVSLKANTVTHGDCTRCGACLDQCATGALAMKLDLGKSFRGIPIVRK</sequence>
<comment type="function">
    <text evidence="3">Involved in electron transfer.</text>
</comment>
<comment type="pathway">
    <text>One-carbon metabolism; methylamine degradation.</text>
</comment>
<protein>
    <recommendedName>
        <fullName>Methylamine utilization ferredoxin-type protein MauN</fullName>
    </recommendedName>
</protein>
<name>MAUN_METFK</name>
<proteinExistence type="predicted"/>